<evidence type="ECO:0000255" key="1">
    <source>
        <dbReference type="HAMAP-Rule" id="MF_01006"/>
    </source>
</evidence>
<keyword id="KW-0046">Antibiotic resistance</keyword>
<keyword id="KW-0997">Cell inner membrane</keyword>
<keyword id="KW-1003">Cell membrane</keyword>
<keyword id="KW-0133">Cell shape</keyword>
<keyword id="KW-0961">Cell wall biogenesis/degradation</keyword>
<keyword id="KW-0378">Hydrolase</keyword>
<keyword id="KW-0472">Membrane</keyword>
<keyword id="KW-0573">Peptidoglycan synthesis</keyword>
<keyword id="KW-1185">Reference proteome</keyword>
<keyword id="KW-0812">Transmembrane</keyword>
<keyword id="KW-1133">Transmembrane helix</keyword>
<comment type="function">
    <text evidence="1">Catalyzes the dephosphorylation of undecaprenyl diphosphate (UPP). Confers resistance to bacitracin.</text>
</comment>
<comment type="catalytic activity">
    <reaction evidence="1">
        <text>di-trans,octa-cis-undecaprenyl diphosphate + H2O = di-trans,octa-cis-undecaprenyl phosphate + phosphate + H(+)</text>
        <dbReference type="Rhea" id="RHEA:28094"/>
        <dbReference type="ChEBI" id="CHEBI:15377"/>
        <dbReference type="ChEBI" id="CHEBI:15378"/>
        <dbReference type="ChEBI" id="CHEBI:43474"/>
        <dbReference type="ChEBI" id="CHEBI:58405"/>
        <dbReference type="ChEBI" id="CHEBI:60392"/>
        <dbReference type="EC" id="3.6.1.27"/>
    </reaction>
</comment>
<comment type="subcellular location">
    <subcellularLocation>
        <location evidence="1">Cell inner membrane</location>
        <topology evidence="1">Multi-pass membrane protein</topology>
    </subcellularLocation>
</comment>
<comment type="miscellaneous">
    <text>Bacitracin is thought to be involved in the inhibition of peptidoglycan synthesis by sequestering undecaprenyl diphosphate, thereby reducing the pool of lipid carrier available.</text>
</comment>
<comment type="similarity">
    <text evidence="1">Belongs to the UppP family.</text>
</comment>
<name>UPPP_CAMHC</name>
<protein>
    <recommendedName>
        <fullName evidence="1">Undecaprenyl-diphosphatase</fullName>
        <ecNumber evidence="1">3.6.1.27</ecNumber>
    </recommendedName>
    <alternativeName>
        <fullName evidence="1">Bacitracin resistance protein</fullName>
    </alternativeName>
    <alternativeName>
        <fullName evidence="1">Undecaprenyl pyrophosphate phosphatase</fullName>
    </alternativeName>
</protein>
<feature type="chain" id="PRO_1000062792" description="Undecaprenyl-diphosphatase">
    <location>
        <begin position="1"/>
        <end position="258"/>
    </location>
</feature>
<feature type="transmembrane region" description="Helical" evidence="1">
    <location>
        <begin position="1"/>
        <end position="21"/>
    </location>
</feature>
<feature type="transmembrane region" description="Helical" evidence="1">
    <location>
        <begin position="42"/>
        <end position="62"/>
    </location>
</feature>
<feature type="transmembrane region" description="Helical" evidence="1">
    <location>
        <begin position="71"/>
        <end position="91"/>
    </location>
</feature>
<feature type="transmembrane region" description="Helical" evidence="1">
    <location>
        <begin position="96"/>
        <end position="116"/>
    </location>
</feature>
<feature type="transmembrane region" description="Helical" evidence="1">
    <location>
        <begin position="134"/>
        <end position="154"/>
    </location>
</feature>
<feature type="transmembrane region" description="Helical" evidence="1">
    <location>
        <begin position="173"/>
        <end position="193"/>
    </location>
</feature>
<feature type="transmembrane region" description="Helical" evidence="1">
    <location>
        <begin position="211"/>
        <end position="231"/>
    </location>
</feature>
<feature type="transmembrane region" description="Helical" evidence="1">
    <location>
        <begin position="237"/>
        <end position="257"/>
    </location>
</feature>
<accession>A7I0J2</accession>
<proteinExistence type="inferred from homology"/>
<organism>
    <name type="scientific">Campylobacter hominis (strain ATCC BAA-381 / DSM 21671 / CCUG 45161 / LMG 19568 / NCTC 13146 / CH001A)</name>
    <dbReference type="NCBI Taxonomy" id="360107"/>
    <lineage>
        <taxon>Bacteria</taxon>
        <taxon>Pseudomonadati</taxon>
        <taxon>Campylobacterota</taxon>
        <taxon>Epsilonproteobacteria</taxon>
        <taxon>Campylobacterales</taxon>
        <taxon>Campylobacteraceae</taxon>
        <taxon>Campylobacter</taxon>
    </lineage>
</organism>
<gene>
    <name evidence="1" type="primary">uppP</name>
    <name type="ordered locus">CHAB381_0437</name>
</gene>
<dbReference type="EC" id="3.6.1.27" evidence="1"/>
<dbReference type="EMBL" id="CP000776">
    <property type="protein sequence ID" value="ABS52481.1"/>
    <property type="molecule type" value="Genomic_DNA"/>
</dbReference>
<dbReference type="RefSeq" id="WP_012108316.1">
    <property type="nucleotide sequence ID" value="NC_009714.1"/>
</dbReference>
<dbReference type="SMR" id="A7I0J2"/>
<dbReference type="STRING" id="360107.CHAB381_0437"/>
<dbReference type="KEGG" id="cha:CHAB381_0437"/>
<dbReference type="eggNOG" id="COG1968">
    <property type="taxonomic scope" value="Bacteria"/>
</dbReference>
<dbReference type="HOGENOM" id="CLU_060296_2_0_7"/>
<dbReference type="OrthoDB" id="9808289at2"/>
<dbReference type="Proteomes" id="UP000002407">
    <property type="component" value="Chromosome"/>
</dbReference>
<dbReference type="GO" id="GO:0005886">
    <property type="term" value="C:plasma membrane"/>
    <property type="evidence" value="ECO:0007669"/>
    <property type="project" value="UniProtKB-SubCell"/>
</dbReference>
<dbReference type="GO" id="GO:0050380">
    <property type="term" value="F:undecaprenyl-diphosphatase activity"/>
    <property type="evidence" value="ECO:0007669"/>
    <property type="project" value="UniProtKB-UniRule"/>
</dbReference>
<dbReference type="GO" id="GO:0071555">
    <property type="term" value="P:cell wall organization"/>
    <property type="evidence" value="ECO:0007669"/>
    <property type="project" value="UniProtKB-KW"/>
</dbReference>
<dbReference type="GO" id="GO:0009252">
    <property type="term" value="P:peptidoglycan biosynthetic process"/>
    <property type="evidence" value="ECO:0007669"/>
    <property type="project" value="UniProtKB-KW"/>
</dbReference>
<dbReference type="GO" id="GO:0008360">
    <property type="term" value="P:regulation of cell shape"/>
    <property type="evidence" value="ECO:0007669"/>
    <property type="project" value="UniProtKB-KW"/>
</dbReference>
<dbReference type="GO" id="GO:0046677">
    <property type="term" value="P:response to antibiotic"/>
    <property type="evidence" value="ECO:0007669"/>
    <property type="project" value="UniProtKB-UniRule"/>
</dbReference>
<dbReference type="HAMAP" id="MF_01006">
    <property type="entry name" value="Undec_diphosphatase"/>
    <property type="match status" value="1"/>
</dbReference>
<dbReference type="InterPro" id="IPR003824">
    <property type="entry name" value="UppP"/>
</dbReference>
<dbReference type="NCBIfam" id="NF001389">
    <property type="entry name" value="PRK00281.1-2"/>
    <property type="match status" value="1"/>
</dbReference>
<dbReference type="NCBIfam" id="NF001390">
    <property type="entry name" value="PRK00281.1-4"/>
    <property type="match status" value="1"/>
</dbReference>
<dbReference type="NCBIfam" id="TIGR00753">
    <property type="entry name" value="undec_PP_bacA"/>
    <property type="match status" value="1"/>
</dbReference>
<dbReference type="PANTHER" id="PTHR30622">
    <property type="entry name" value="UNDECAPRENYL-DIPHOSPHATASE"/>
    <property type="match status" value="1"/>
</dbReference>
<dbReference type="PANTHER" id="PTHR30622:SF3">
    <property type="entry name" value="UNDECAPRENYL-DIPHOSPHATASE"/>
    <property type="match status" value="1"/>
</dbReference>
<dbReference type="Pfam" id="PF02673">
    <property type="entry name" value="BacA"/>
    <property type="match status" value="1"/>
</dbReference>
<sequence length="258" mass="28868">MSIIDAVILGIVEGLTEFLPVSSTGHLILTAGLLNLEQTDTLKCFEVVIQLGSILAVVFTFFERLKRDKQLWIKLIIGFLPTAAIGYLLYSHIKSLFSQNVVVYMLIIWGVIFIVVELLRKKNPPENEILTLDGISYKQAFFIGLSQCFAMVPGTSRSGATIIAGLLSGLNRQTAAAFSFLLAVPTMFAATFYDTYKNREIFAANMDNIQLFLLGGFVAFLVALFAIKMFLKFVSRFDYIPFGIYRILIAFAFMFFVL</sequence>
<reference key="1">
    <citation type="submission" date="2007-07" db="EMBL/GenBank/DDBJ databases">
        <title>Complete genome sequence of Campylobacter hominis ATCC BAA-381, a commensal isolated from the human gastrointestinal tract.</title>
        <authorList>
            <person name="Fouts D.E."/>
            <person name="Mongodin E.F."/>
            <person name="Puiu D."/>
            <person name="Sebastian Y."/>
            <person name="Miller W.G."/>
            <person name="Mandrell R.E."/>
            <person name="Nelson K.E."/>
        </authorList>
    </citation>
    <scope>NUCLEOTIDE SEQUENCE [LARGE SCALE GENOMIC DNA]</scope>
    <source>
        <strain>ATCC BAA-381 / DSM 21671 / CCUG 45161 / LMG 19568 / NCTC 13146 / CH001A</strain>
    </source>
</reference>